<reference key="1">
    <citation type="journal article" date="2012" name="Mol. Cell. Proteomics">
        <title>Chemical punch packed in venoms makes centipedes excellent predators.</title>
        <authorList>
            <person name="Yang S."/>
            <person name="Liu Z."/>
            <person name="Xiao Y."/>
            <person name="Li Y."/>
            <person name="Rong M."/>
            <person name="Liang S."/>
            <person name="Zhang Z."/>
            <person name="Yu H."/>
            <person name="King G.F."/>
            <person name="Lai R."/>
        </authorList>
    </citation>
    <scope>NUCLEOTIDE SEQUENCE [MRNA]</scope>
    <source>
        <tissue>Venom gland</tissue>
    </source>
</reference>
<comment type="function">
    <text evidence="1">Inhibits voltage-gated potassium channels.</text>
</comment>
<comment type="subcellular location">
    <subcellularLocation>
        <location evidence="5">Secreted</location>
    </subcellularLocation>
</comment>
<comment type="tissue specificity">
    <text evidence="5">Expressed by the venom gland.</text>
</comment>
<comment type="PTM">
    <text evidence="4">Contains 3 disulfide bonds.</text>
</comment>
<comment type="similarity">
    <text evidence="4">Belongs to the scoloptoxin-07 family.</text>
</comment>
<comment type="sequence caution" evidence="4">
    <conflict type="erroneous initiation">
        <sequence resource="EMBL-CDS" id="AFM55011"/>
    </conflict>
    <text>Extended N-terminus.</text>
</comment>
<name>TX72C_SCOMU</name>
<proteinExistence type="inferred from homology"/>
<organism>
    <name type="scientific">Scolopendra mutilans</name>
    <name type="common">Chinese red-headed centipede</name>
    <name type="synonym">Scolopendra subspinipes mutilans</name>
    <dbReference type="NCBI Taxonomy" id="2836329"/>
    <lineage>
        <taxon>Eukaryota</taxon>
        <taxon>Metazoa</taxon>
        <taxon>Ecdysozoa</taxon>
        <taxon>Arthropoda</taxon>
        <taxon>Myriapoda</taxon>
        <taxon>Chilopoda</taxon>
        <taxon>Pleurostigmophora</taxon>
        <taxon>Scolopendromorpha</taxon>
        <taxon>Scolopendridae</taxon>
        <taxon>Scolopendra</taxon>
    </lineage>
</organism>
<accession>I6R1R7</accession>
<sequence>MLVFYAPLFVSIFSNTVMGATIDKPIPKPILREAIEKIAVNKRADSRYCKEEKCPPGKHCPKVPIVCVRGPCCF</sequence>
<feature type="signal peptide" evidence="2">
    <location>
        <begin position="1"/>
        <end position="19"/>
    </location>
</feature>
<feature type="propeptide" id="PRO_0000425477" evidence="1">
    <location>
        <begin position="20"/>
        <end position="41"/>
    </location>
</feature>
<feature type="chain" id="PRO_0000425478" description="Kappa-scoloptoxin(07)-Ssm2c" evidence="1">
    <location>
        <begin position="44"/>
        <end position="74"/>
    </location>
</feature>
<feature type="sequence conflict" description="In Ref. 1; AFM55011." evidence="4" ref="1">
    <original>P</original>
    <variation>I</variation>
    <location>
        <position position="7"/>
    </location>
</feature>
<feature type="sequence conflict" description="In Ref. 1; AFM55011." evidence="4" ref="1">
    <original>SI</original>
    <variation>IV</variation>
    <location>
        <begin position="11"/>
        <end position="12"/>
    </location>
</feature>
<protein>
    <recommendedName>
        <fullName evidence="1">Kappa-scoloptoxin(07)-Ssm2c</fullName>
        <shortName evidence="1">Kappa-SLPTX(07)-Ssm2c</shortName>
    </recommendedName>
    <alternativeName>
        <fullName evidence="3">Kappa-scoloptoxin-Ssm2c</fullName>
        <shortName evidence="3">Kappa-SLPTX-Ssm2c</shortName>
    </alternativeName>
</protein>
<dbReference type="EMBL" id="JQ757064">
    <property type="protein sequence ID" value="AFM55011.1"/>
    <property type="status" value="ALT_INIT"/>
    <property type="molecule type" value="mRNA"/>
</dbReference>
<dbReference type="SMR" id="I6R1R7"/>
<dbReference type="GO" id="GO:0005576">
    <property type="term" value="C:extracellular region"/>
    <property type="evidence" value="ECO:0007669"/>
    <property type="project" value="UniProtKB-SubCell"/>
</dbReference>
<dbReference type="GO" id="GO:0015459">
    <property type="term" value="F:potassium channel regulator activity"/>
    <property type="evidence" value="ECO:0007669"/>
    <property type="project" value="UniProtKB-KW"/>
</dbReference>
<dbReference type="GO" id="GO:0090729">
    <property type="term" value="F:toxin activity"/>
    <property type="evidence" value="ECO:0007669"/>
    <property type="project" value="UniProtKB-KW"/>
</dbReference>
<keyword id="KW-0165">Cleavage on pair of basic residues</keyword>
<keyword id="KW-1015">Disulfide bond</keyword>
<keyword id="KW-0872">Ion channel impairing toxin</keyword>
<keyword id="KW-0528">Neurotoxin</keyword>
<keyword id="KW-0632">Potassium channel impairing toxin</keyword>
<keyword id="KW-0964">Secreted</keyword>
<keyword id="KW-0732">Signal</keyword>
<keyword id="KW-0800">Toxin</keyword>
<keyword id="KW-1220">Voltage-gated potassium channel impairing toxin</keyword>
<evidence type="ECO:0000250" key="1">
    <source>
        <dbReference type="UniProtKB" id="I6RA66"/>
    </source>
</evidence>
<evidence type="ECO:0000255" key="2"/>
<evidence type="ECO:0000303" key="3">
    <source>
    </source>
</evidence>
<evidence type="ECO:0000305" key="4"/>
<evidence type="ECO:0000305" key="5">
    <source>
    </source>
</evidence>